<protein>
    <recommendedName>
        <fullName evidence="1">Glutamine--fructose-6-phosphate aminotransferase [isomerizing]</fullName>
        <ecNumber evidence="1">2.6.1.16</ecNumber>
    </recommendedName>
    <alternativeName>
        <fullName evidence="1">D-fructose-6-phosphate amidotransferase</fullName>
    </alternativeName>
    <alternativeName>
        <fullName evidence="1">GFAT</fullName>
    </alternativeName>
    <alternativeName>
        <fullName evidence="1">Glucosamine-6-phosphate synthase</fullName>
    </alternativeName>
    <alternativeName>
        <fullName evidence="1">Hexosephosphate aminotransferase</fullName>
    </alternativeName>
    <alternativeName>
        <fullName evidence="1">L-glutamine--D-fructose-6-phosphate amidotransferase</fullName>
    </alternativeName>
</protein>
<dbReference type="EC" id="2.6.1.16" evidence="1"/>
<dbReference type="EMBL" id="AE014299">
    <property type="protein sequence ID" value="AAN57700.1"/>
    <property type="molecule type" value="Genomic_DNA"/>
</dbReference>
<dbReference type="RefSeq" id="NP_720257.1">
    <property type="nucleotide sequence ID" value="NC_004347.2"/>
</dbReference>
<dbReference type="RefSeq" id="WP_011074325.1">
    <property type="nucleotide sequence ID" value="NC_004347.2"/>
</dbReference>
<dbReference type="SMR" id="Q8CX33"/>
<dbReference type="STRING" id="211586.SO_4741"/>
<dbReference type="PaxDb" id="211586-SO_4741"/>
<dbReference type="KEGG" id="son:SO_4741"/>
<dbReference type="PATRIC" id="fig|211586.12.peg.4598"/>
<dbReference type="eggNOG" id="COG0449">
    <property type="taxonomic scope" value="Bacteria"/>
</dbReference>
<dbReference type="HOGENOM" id="CLU_012520_5_2_6"/>
<dbReference type="OrthoDB" id="9761808at2"/>
<dbReference type="PhylomeDB" id="Q8CX33"/>
<dbReference type="BioCyc" id="SONE211586:G1GMP-4387-MONOMER"/>
<dbReference type="Proteomes" id="UP000008186">
    <property type="component" value="Chromosome"/>
</dbReference>
<dbReference type="GO" id="GO:0005829">
    <property type="term" value="C:cytosol"/>
    <property type="evidence" value="ECO:0000318"/>
    <property type="project" value="GO_Central"/>
</dbReference>
<dbReference type="GO" id="GO:0097367">
    <property type="term" value="F:carbohydrate derivative binding"/>
    <property type="evidence" value="ECO:0007669"/>
    <property type="project" value="InterPro"/>
</dbReference>
<dbReference type="GO" id="GO:0004360">
    <property type="term" value="F:glutamine-fructose-6-phosphate transaminase (isomerizing) activity"/>
    <property type="evidence" value="ECO:0000318"/>
    <property type="project" value="GO_Central"/>
</dbReference>
<dbReference type="GO" id="GO:0005975">
    <property type="term" value="P:carbohydrate metabolic process"/>
    <property type="evidence" value="ECO:0007669"/>
    <property type="project" value="UniProtKB-UniRule"/>
</dbReference>
<dbReference type="GO" id="GO:0006002">
    <property type="term" value="P:fructose 6-phosphate metabolic process"/>
    <property type="evidence" value="ECO:0000318"/>
    <property type="project" value="GO_Central"/>
</dbReference>
<dbReference type="GO" id="GO:0006487">
    <property type="term" value="P:protein N-linked glycosylation"/>
    <property type="evidence" value="ECO:0000318"/>
    <property type="project" value="GO_Central"/>
</dbReference>
<dbReference type="GO" id="GO:0006047">
    <property type="term" value="P:UDP-N-acetylglucosamine metabolic process"/>
    <property type="evidence" value="ECO:0000318"/>
    <property type="project" value="GO_Central"/>
</dbReference>
<dbReference type="CDD" id="cd00714">
    <property type="entry name" value="GFAT"/>
    <property type="match status" value="1"/>
</dbReference>
<dbReference type="CDD" id="cd05008">
    <property type="entry name" value="SIS_GlmS_GlmD_1"/>
    <property type="match status" value="1"/>
</dbReference>
<dbReference type="CDD" id="cd05009">
    <property type="entry name" value="SIS_GlmS_GlmD_2"/>
    <property type="match status" value="1"/>
</dbReference>
<dbReference type="FunFam" id="3.40.50.10490:FF:000001">
    <property type="entry name" value="Glutamine--fructose-6-phosphate aminotransferase [isomerizing]"/>
    <property type="match status" value="1"/>
</dbReference>
<dbReference type="FunFam" id="3.40.50.10490:FF:000002">
    <property type="entry name" value="Glutamine--fructose-6-phosphate aminotransferase [isomerizing]"/>
    <property type="match status" value="1"/>
</dbReference>
<dbReference type="FunFam" id="3.60.20.10:FF:000006">
    <property type="entry name" value="Glutamine--fructose-6-phosphate aminotransferase [isomerizing]"/>
    <property type="match status" value="1"/>
</dbReference>
<dbReference type="Gene3D" id="3.40.50.10490">
    <property type="entry name" value="Glucose-6-phosphate isomerase like protein, domain 1"/>
    <property type="match status" value="2"/>
</dbReference>
<dbReference type="Gene3D" id="3.60.20.10">
    <property type="entry name" value="Glutamine Phosphoribosylpyrophosphate, subunit 1, domain 1"/>
    <property type="match status" value="1"/>
</dbReference>
<dbReference type="HAMAP" id="MF_00164">
    <property type="entry name" value="GlmS"/>
    <property type="match status" value="1"/>
</dbReference>
<dbReference type="InterPro" id="IPR017932">
    <property type="entry name" value="GATase_2_dom"/>
</dbReference>
<dbReference type="InterPro" id="IPR005855">
    <property type="entry name" value="GFAT"/>
</dbReference>
<dbReference type="InterPro" id="IPR047084">
    <property type="entry name" value="GFAT_N"/>
</dbReference>
<dbReference type="InterPro" id="IPR035466">
    <property type="entry name" value="GlmS/AgaS_SIS"/>
</dbReference>
<dbReference type="InterPro" id="IPR035490">
    <property type="entry name" value="GlmS/FrlB_SIS"/>
</dbReference>
<dbReference type="InterPro" id="IPR029055">
    <property type="entry name" value="Ntn_hydrolases_N"/>
</dbReference>
<dbReference type="InterPro" id="IPR001347">
    <property type="entry name" value="SIS_dom"/>
</dbReference>
<dbReference type="InterPro" id="IPR046348">
    <property type="entry name" value="SIS_dom_sf"/>
</dbReference>
<dbReference type="NCBIfam" id="TIGR01135">
    <property type="entry name" value="glmS"/>
    <property type="match status" value="1"/>
</dbReference>
<dbReference type="NCBIfam" id="NF001484">
    <property type="entry name" value="PRK00331.1"/>
    <property type="match status" value="1"/>
</dbReference>
<dbReference type="PANTHER" id="PTHR10937">
    <property type="entry name" value="GLUCOSAMINE--FRUCTOSE-6-PHOSPHATE AMINOTRANSFERASE, ISOMERIZING"/>
    <property type="match status" value="1"/>
</dbReference>
<dbReference type="PANTHER" id="PTHR10937:SF0">
    <property type="entry name" value="GLUTAMINE--FRUCTOSE-6-PHOSPHATE TRANSAMINASE (ISOMERIZING)"/>
    <property type="match status" value="1"/>
</dbReference>
<dbReference type="Pfam" id="PF13522">
    <property type="entry name" value="GATase_6"/>
    <property type="match status" value="1"/>
</dbReference>
<dbReference type="Pfam" id="PF01380">
    <property type="entry name" value="SIS"/>
    <property type="match status" value="2"/>
</dbReference>
<dbReference type="SUPFAM" id="SSF56235">
    <property type="entry name" value="N-terminal nucleophile aminohydrolases (Ntn hydrolases)"/>
    <property type="match status" value="1"/>
</dbReference>
<dbReference type="SUPFAM" id="SSF53697">
    <property type="entry name" value="SIS domain"/>
    <property type="match status" value="1"/>
</dbReference>
<dbReference type="PROSITE" id="PS51278">
    <property type="entry name" value="GATASE_TYPE_2"/>
    <property type="match status" value="1"/>
</dbReference>
<dbReference type="PROSITE" id="PS51464">
    <property type="entry name" value="SIS"/>
    <property type="match status" value="2"/>
</dbReference>
<gene>
    <name evidence="1" type="primary">glmS</name>
    <name type="ordered locus">SO_4741</name>
</gene>
<accession>Q8CX33</accession>
<feature type="initiator methionine" description="Removed" evidence="1">
    <location>
        <position position="1"/>
    </location>
</feature>
<feature type="chain" id="PRO_0000135376" description="Glutamine--fructose-6-phosphate aminotransferase [isomerizing]">
    <location>
        <begin position="2"/>
        <end position="609"/>
    </location>
</feature>
<feature type="domain" description="Glutamine amidotransferase type-2" evidence="1">
    <location>
        <begin position="2"/>
        <end position="218"/>
    </location>
</feature>
<feature type="domain" description="SIS 1" evidence="1">
    <location>
        <begin position="286"/>
        <end position="426"/>
    </location>
</feature>
<feature type="domain" description="SIS 2" evidence="1">
    <location>
        <begin position="458"/>
        <end position="599"/>
    </location>
</feature>
<feature type="active site" description="Nucleophile; for GATase activity" evidence="1">
    <location>
        <position position="2"/>
    </location>
</feature>
<feature type="active site" description="For Fru-6P isomerization activity" evidence="1">
    <location>
        <position position="604"/>
    </location>
</feature>
<sequence>MCGIVGAVAQRDVAEILVEGLRRLEYRGYDSAGVAVIHNGELNRTRRVGKVQELSAALETDPLAGGTGIAHTRWATHGEPSERNAHPHLSEGDIAVVHNGIIENHHKLREMLKEHGYHFSSDTDTEVICHLVHHQLKTNDSLLAAVQATVKQLEGAYGTVVIDRRDSERMVVARSGSPLVIGFGLGENFVASDQLALLPVTRSFAFLEEGDVAEVTRRTVSIFDVHGNKVEREVKESEITHDAGDKGEYRHYMLKEIYEQPLALTRTIEGRIANKQVLDTAFGDNAAEFLKDIKHVQIIACGTSYHAGMAARYWLEDWAGVSCNVEIASEFRYRKSHLFPNSLLVTISQSGETADTLAAMRLAKEMGYKATLTICNAPGSSLVRESDMAYMMKAGAEIGVASTKAFTVQLAGLLMLTAVIGRHNGMSEQMQAEITQSLQSMPAKVEQALGLDDAIAELAEDFADKHHALFLGRGDQYPIAMEGALKLKEISYIHAEAYASGELKHGPLALIDADMPVIVVAPNNELLEKLKSNVEEVRARGGLMYVFADVDAEFESDDTMKVIPVPHCDIFMAPLIYTIPLQLLSYHVALIKGTDVDQPRNLAKSVTVE</sequence>
<name>GLMS_SHEON</name>
<comment type="function">
    <text evidence="1">Catalyzes the first step in hexosamine metabolism, converting fructose-6P into glucosamine-6P using glutamine as a nitrogen source.</text>
</comment>
<comment type="catalytic activity">
    <reaction evidence="1">
        <text>D-fructose 6-phosphate + L-glutamine = D-glucosamine 6-phosphate + L-glutamate</text>
        <dbReference type="Rhea" id="RHEA:13237"/>
        <dbReference type="ChEBI" id="CHEBI:29985"/>
        <dbReference type="ChEBI" id="CHEBI:58359"/>
        <dbReference type="ChEBI" id="CHEBI:58725"/>
        <dbReference type="ChEBI" id="CHEBI:61527"/>
        <dbReference type="EC" id="2.6.1.16"/>
    </reaction>
</comment>
<comment type="subunit">
    <text evidence="1">Homodimer.</text>
</comment>
<comment type="subcellular location">
    <subcellularLocation>
        <location evidence="1">Cytoplasm</location>
    </subcellularLocation>
</comment>
<proteinExistence type="inferred from homology"/>
<keyword id="KW-0032">Aminotransferase</keyword>
<keyword id="KW-0963">Cytoplasm</keyword>
<keyword id="KW-0315">Glutamine amidotransferase</keyword>
<keyword id="KW-1185">Reference proteome</keyword>
<keyword id="KW-0677">Repeat</keyword>
<keyword id="KW-0808">Transferase</keyword>
<organism>
    <name type="scientific">Shewanella oneidensis (strain ATCC 700550 / JCM 31522 / CIP 106686 / LMG 19005 / NCIMB 14063 / MR-1)</name>
    <dbReference type="NCBI Taxonomy" id="211586"/>
    <lineage>
        <taxon>Bacteria</taxon>
        <taxon>Pseudomonadati</taxon>
        <taxon>Pseudomonadota</taxon>
        <taxon>Gammaproteobacteria</taxon>
        <taxon>Alteromonadales</taxon>
        <taxon>Shewanellaceae</taxon>
        <taxon>Shewanella</taxon>
    </lineage>
</organism>
<reference key="1">
    <citation type="journal article" date="2002" name="Nat. Biotechnol.">
        <title>Genome sequence of the dissimilatory metal ion-reducing bacterium Shewanella oneidensis.</title>
        <authorList>
            <person name="Heidelberg J.F."/>
            <person name="Paulsen I.T."/>
            <person name="Nelson K.E."/>
            <person name="Gaidos E.J."/>
            <person name="Nelson W.C."/>
            <person name="Read T.D."/>
            <person name="Eisen J.A."/>
            <person name="Seshadri R."/>
            <person name="Ward N.L."/>
            <person name="Methe B.A."/>
            <person name="Clayton R.A."/>
            <person name="Meyer T."/>
            <person name="Tsapin A."/>
            <person name="Scott J."/>
            <person name="Beanan M.J."/>
            <person name="Brinkac L.M."/>
            <person name="Daugherty S.C."/>
            <person name="DeBoy R.T."/>
            <person name="Dodson R.J."/>
            <person name="Durkin A.S."/>
            <person name="Haft D.H."/>
            <person name="Kolonay J.F."/>
            <person name="Madupu R."/>
            <person name="Peterson J.D."/>
            <person name="Umayam L.A."/>
            <person name="White O."/>
            <person name="Wolf A.M."/>
            <person name="Vamathevan J.J."/>
            <person name="Weidman J.F."/>
            <person name="Impraim M."/>
            <person name="Lee K."/>
            <person name="Berry K.J."/>
            <person name="Lee C."/>
            <person name="Mueller J."/>
            <person name="Khouri H.M."/>
            <person name="Gill J."/>
            <person name="Utterback T.R."/>
            <person name="McDonald L.A."/>
            <person name="Feldblyum T.V."/>
            <person name="Smith H.O."/>
            <person name="Venter J.C."/>
            <person name="Nealson K.H."/>
            <person name="Fraser C.M."/>
        </authorList>
    </citation>
    <scope>NUCLEOTIDE SEQUENCE [LARGE SCALE GENOMIC DNA]</scope>
    <source>
        <strain>ATCC 700550 / JCM 31522 / CIP 106686 / LMG 19005 / NCIMB 14063 / MR-1</strain>
    </source>
</reference>
<evidence type="ECO:0000255" key="1">
    <source>
        <dbReference type="HAMAP-Rule" id="MF_00164"/>
    </source>
</evidence>